<gene>
    <name evidence="1" type="primary">rplT</name>
    <name type="ordered locus">Clos_1976</name>
</gene>
<sequence>MARVKTGKTAHKRHKKVLKLAKGFRGARSKLFRPANQFVMKSLKYAYIGRKLRKRDFRKLWITRINAATRANGLSYSKFMNGLKLAGIDMNRKVLSEMAIYDKEGFAQLVETAKQKLNA</sequence>
<keyword id="KW-1185">Reference proteome</keyword>
<keyword id="KW-0687">Ribonucleoprotein</keyword>
<keyword id="KW-0689">Ribosomal protein</keyword>
<keyword id="KW-0694">RNA-binding</keyword>
<keyword id="KW-0699">rRNA-binding</keyword>
<reference key="1">
    <citation type="submission" date="2007-10" db="EMBL/GenBank/DDBJ databases">
        <title>Complete genome of Alkaliphilus oremlandii OhILAs.</title>
        <authorList>
            <person name="Copeland A."/>
            <person name="Lucas S."/>
            <person name="Lapidus A."/>
            <person name="Barry K."/>
            <person name="Detter J.C."/>
            <person name="Glavina del Rio T."/>
            <person name="Hammon N."/>
            <person name="Israni S."/>
            <person name="Dalin E."/>
            <person name="Tice H."/>
            <person name="Pitluck S."/>
            <person name="Chain P."/>
            <person name="Malfatti S."/>
            <person name="Shin M."/>
            <person name="Vergez L."/>
            <person name="Schmutz J."/>
            <person name="Larimer F."/>
            <person name="Land M."/>
            <person name="Hauser L."/>
            <person name="Kyrpides N."/>
            <person name="Mikhailova N."/>
            <person name="Stolz J.F."/>
            <person name="Dawson A."/>
            <person name="Fisher E."/>
            <person name="Crable B."/>
            <person name="Perera E."/>
            <person name="Lisak J."/>
            <person name="Ranganathan M."/>
            <person name="Basu P."/>
            <person name="Richardson P."/>
        </authorList>
    </citation>
    <scope>NUCLEOTIDE SEQUENCE [LARGE SCALE GENOMIC DNA]</scope>
    <source>
        <strain>OhILAs</strain>
    </source>
</reference>
<dbReference type="EMBL" id="CP000853">
    <property type="protein sequence ID" value="ABW19514.1"/>
    <property type="molecule type" value="Genomic_DNA"/>
</dbReference>
<dbReference type="RefSeq" id="WP_012159826.1">
    <property type="nucleotide sequence ID" value="NC_009922.1"/>
</dbReference>
<dbReference type="SMR" id="A8MI82"/>
<dbReference type="STRING" id="350688.Clos_1976"/>
<dbReference type="KEGG" id="aoe:Clos_1976"/>
<dbReference type="eggNOG" id="COG0292">
    <property type="taxonomic scope" value="Bacteria"/>
</dbReference>
<dbReference type="HOGENOM" id="CLU_123265_0_1_9"/>
<dbReference type="OrthoDB" id="9808966at2"/>
<dbReference type="Proteomes" id="UP000000269">
    <property type="component" value="Chromosome"/>
</dbReference>
<dbReference type="GO" id="GO:1990904">
    <property type="term" value="C:ribonucleoprotein complex"/>
    <property type="evidence" value="ECO:0007669"/>
    <property type="project" value="UniProtKB-KW"/>
</dbReference>
<dbReference type="GO" id="GO:0005840">
    <property type="term" value="C:ribosome"/>
    <property type="evidence" value="ECO:0007669"/>
    <property type="project" value="UniProtKB-KW"/>
</dbReference>
<dbReference type="GO" id="GO:0019843">
    <property type="term" value="F:rRNA binding"/>
    <property type="evidence" value="ECO:0007669"/>
    <property type="project" value="UniProtKB-UniRule"/>
</dbReference>
<dbReference type="GO" id="GO:0003735">
    <property type="term" value="F:structural constituent of ribosome"/>
    <property type="evidence" value="ECO:0007669"/>
    <property type="project" value="InterPro"/>
</dbReference>
<dbReference type="GO" id="GO:0000027">
    <property type="term" value="P:ribosomal large subunit assembly"/>
    <property type="evidence" value="ECO:0007669"/>
    <property type="project" value="UniProtKB-UniRule"/>
</dbReference>
<dbReference type="GO" id="GO:0006412">
    <property type="term" value="P:translation"/>
    <property type="evidence" value="ECO:0007669"/>
    <property type="project" value="InterPro"/>
</dbReference>
<dbReference type="CDD" id="cd07026">
    <property type="entry name" value="Ribosomal_L20"/>
    <property type="match status" value="1"/>
</dbReference>
<dbReference type="FunFam" id="1.10.1900.20:FF:000001">
    <property type="entry name" value="50S ribosomal protein L20"/>
    <property type="match status" value="1"/>
</dbReference>
<dbReference type="Gene3D" id="6.10.160.10">
    <property type="match status" value="1"/>
</dbReference>
<dbReference type="Gene3D" id="1.10.1900.20">
    <property type="entry name" value="Ribosomal protein L20"/>
    <property type="match status" value="1"/>
</dbReference>
<dbReference type="HAMAP" id="MF_00382">
    <property type="entry name" value="Ribosomal_bL20"/>
    <property type="match status" value="1"/>
</dbReference>
<dbReference type="InterPro" id="IPR005813">
    <property type="entry name" value="Ribosomal_bL20"/>
</dbReference>
<dbReference type="InterPro" id="IPR049946">
    <property type="entry name" value="RIBOSOMAL_L20_CS"/>
</dbReference>
<dbReference type="InterPro" id="IPR035566">
    <property type="entry name" value="Ribosomal_protein_bL20_C"/>
</dbReference>
<dbReference type="NCBIfam" id="TIGR01032">
    <property type="entry name" value="rplT_bact"/>
    <property type="match status" value="1"/>
</dbReference>
<dbReference type="PANTHER" id="PTHR10986">
    <property type="entry name" value="39S RIBOSOMAL PROTEIN L20"/>
    <property type="match status" value="1"/>
</dbReference>
<dbReference type="Pfam" id="PF00453">
    <property type="entry name" value="Ribosomal_L20"/>
    <property type="match status" value="1"/>
</dbReference>
<dbReference type="PRINTS" id="PR00062">
    <property type="entry name" value="RIBOSOMALL20"/>
</dbReference>
<dbReference type="SUPFAM" id="SSF74731">
    <property type="entry name" value="Ribosomal protein L20"/>
    <property type="match status" value="1"/>
</dbReference>
<dbReference type="PROSITE" id="PS00937">
    <property type="entry name" value="RIBOSOMAL_L20"/>
    <property type="match status" value="1"/>
</dbReference>
<protein>
    <recommendedName>
        <fullName evidence="1">Large ribosomal subunit protein bL20</fullName>
    </recommendedName>
    <alternativeName>
        <fullName evidence="2">50S ribosomal protein L20</fullName>
    </alternativeName>
</protein>
<comment type="function">
    <text evidence="1">Binds directly to 23S ribosomal RNA and is necessary for the in vitro assembly process of the 50S ribosomal subunit. It is not involved in the protein synthesizing functions of that subunit.</text>
</comment>
<comment type="similarity">
    <text evidence="1">Belongs to the bacterial ribosomal protein bL20 family.</text>
</comment>
<evidence type="ECO:0000255" key="1">
    <source>
        <dbReference type="HAMAP-Rule" id="MF_00382"/>
    </source>
</evidence>
<evidence type="ECO:0000305" key="2"/>
<proteinExistence type="inferred from homology"/>
<organism>
    <name type="scientific">Alkaliphilus oremlandii (strain OhILAs)</name>
    <name type="common">Clostridium oremlandii (strain OhILAs)</name>
    <dbReference type="NCBI Taxonomy" id="350688"/>
    <lineage>
        <taxon>Bacteria</taxon>
        <taxon>Bacillati</taxon>
        <taxon>Bacillota</taxon>
        <taxon>Clostridia</taxon>
        <taxon>Peptostreptococcales</taxon>
        <taxon>Natronincolaceae</taxon>
        <taxon>Alkaliphilus</taxon>
    </lineage>
</organism>
<accession>A8MI82</accession>
<feature type="chain" id="PRO_1000060684" description="Large ribosomal subunit protein bL20">
    <location>
        <begin position="1"/>
        <end position="119"/>
    </location>
</feature>
<name>RL20_ALKOO</name>